<dbReference type="EMBL" id="AB030277">
    <property type="protein sequence ID" value="BAA95348.1"/>
    <property type="molecule type" value="Genomic_RNA"/>
</dbReference>
<dbReference type="RefSeq" id="NP_057958.1">
    <property type="nucleotide sequence ID" value="NC_002251.1"/>
</dbReference>
<dbReference type="GeneID" id="1457720"/>
<dbReference type="KEGG" id="vg:1457720"/>
<dbReference type="Proteomes" id="UP000007785">
    <property type="component" value="Genome"/>
</dbReference>
<proteinExistence type="predicted"/>
<feature type="chain" id="PRO_0000299215" description="Protein 5">
    <location>
        <begin position="1"/>
        <end position="125"/>
    </location>
</feature>
<organismHost>
    <name type="scientific">Hordeum vulgare</name>
    <name type="common">Barley</name>
    <dbReference type="NCBI Taxonomy" id="4513"/>
</organismHost>
<organism>
    <name type="scientific">Northern cereal mosaic virus</name>
    <name type="common">NCMV</name>
    <dbReference type="NCBI Taxonomy" id="1985704"/>
    <lineage>
        <taxon>Viruses</taxon>
        <taxon>Riboviria</taxon>
        <taxon>Orthornavirae</taxon>
        <taxon>Negarnaviricota</taxon>
        <taxon>Haploviricotina</taxon>
        <taxon>Monjiviricetes</taxon>
        <taxon>Mononegavirales</taxon>
        <taxon>Rhabdoviridae</taxon>
        <taxon>Betarhabdovirinae</taxon>
        <taxon>Cytorhabdovirus</taxon>
    </lineage>
</organism>
<keyword id="KW-1185">Reference proteome</keyword>
<reference key="1">
    <citation type="journal article" date="2000" name="Arch. Virol.">
        <title>Complete nucleotide sequence of Northern cereal mosaic virus and its genome organization.</title>
        <authorList>
            <person name="Tanno F."/>
            <person name="Nakatsu A."/>
            <person name="Toriyama S."/>
            <person name="Kojima M."/>
        </authorList>
    </citation>
    <scope>NUCLEOTIDE SEQUENCE [GENOMIC RNA]</scope>
</reference>
<accession>Q9JGT7</accession>
<gene>
    <name type="primary">5</name>
</gene>
<name>VP5_NCMV</name>
<sequence>MDELRLIGRCIAVKMVSPRPRTSLTRGDFRGVSWDKREWKAIIKRRGSRFVRAELIPRSRDDNGQCISILFSDDTSGITMSAGVCKFLLVFDPTVEIFLDIPRDAQLNDSITFEELDPPVTISPY</sequence>
<protein>
    <recommendedName>
        <fullName>Protein 5</fullName>
    </recommendedName>
</protein>